<feature type="chain" id="PRO_0000388785" description="Transcription factor mef2A">
    <location>
        <begin position="1"/>
        <end position="1048"/>
    </location>
</feature>
<feature type="domain" description="MADS-box" evidence="2">
    <location>
        <begin position="1"/>
        <end position="61"/>
    </location>
</feature>
<feature type="region of interest" description="Disordered" evidence="3">
    <location>
        <begin position="74"/>
        <end position="263"/>
    </location>
</feature>
<feature type="region of interest" description="Disordered" evidence="3">
    <location>
        <begin position="294"/>
        <end position="339"/>
    </location>
</feature>
<feature type="region of interest" description="Disordered" evidence="3">
    <location>
        <begin position="386"/>
        <end position="812"/>
    </location>
</feature>
<feature type="region of interest" description="Disordered" evidence="3">
    <location>
        <begin position="916"/>
        <end position="1048"/>
    </location>
</feature>
<feature type="coiled-coil region" evidence="1">
    <location>
        <begin position="249"/>
        <end position="304"/>
    </location>
</feature>
<feature type="compositionally biased region" description="Polar residues" evidence="3">
    <location>
        <begin position="74"/>
        <end position="85"/>
    </location>
</feature>
<feature type="compositionally biased region" description="Acidic residues" evidence="3">
    <location>
        <begin position="97"/>
        <end position="110"/>
    </location>
</feature>
<feature type="compositionally biased region" description="Low complexity" evidence="3">
    <location>
        <begin position="130"/>
        <end position="205"/>
    </location>
</feature>
<feature type="compositionally biased region" description="Low complexity" evidence="3">
    <location>
        <begin position="212"/>
        <end position="263"/>
    </location>
</feature>
<feature type="compositionally biased region" description="Low complexity" evidence="3">
    <location>
        <begin position="294"/>
        <end position="303"/>
    </location>
</feature>
<feature type="compositionally biased region" description="Low complexity" evidence="3">
    <location>
        <begin position="327"/>
        <end position="339"/>
    </location>
</feature>
<feature type="compositionally biased region" description="Low complexity" evidence="3">
    <location>
        <begin position="393"/>
        <end position="437"/>
    </location>
</feature>
<feature type="compositionally biased region" description="Low complexity" evidence="3">
    <location>
        <begin position="446"/>
        <end position="466"/>
    </location>
</feature>
<feature type="compositionally biased region" description="Low complexity" evidence="3">
    <location>
        <begin position="481"/>
        <end position="500"/>
    </location>
</feature>
<feature type="compositionally biased region" description="Polar residues" evidence="3">
    <location>
        <begin position="506"/>
        <end position="522"/>
    </location>
</feature>
<feature type="compositionally biased region" description="Basic residues" evidence="3">
    <location>
        <begin position="529"/>
        <end position="539"/>
    </location>
</feature>
<feature type="compositionally biased region" description="Low complexity" evidence="3">
    <location>
        <begin position="540"/>
        <end position="593"/>
    </location>
</feature>
<feature type="compositionally biased region" description="Polar residues" evidence="3">
    <location>
        <begin position="600"/>
        <end position="618"/>
    </location>
</feature>
<feature type="compositionally biased region" description="Low complexity" evidence="3">
    <location>
        <begin position="619"/>
        <end position="699"/>
    </location>
</feature>
<feature type="compositionally biased region" description="Polar residues" evidence="3">
    <location>
        <begin position="715"/>
        <end position="736"/>
    </location>
</feature>
<feature type="compositionally biased region" description="Low complexity" evidence="3">
    <location>
        <begin position="738"/>
        <end position="802"/>
    </location>
</feature>
<feature type="compositionally biased region" description="Low complexity" evidence="3">
    <location>
        <begin position="924"/>
        <end position="960"/>
    </location>
</feature>
<feature type="compositionally biased region" description="Low complexity" evidence="3">
    <location>
        <begin position="982"/>
        <end position="1029"/>
    </location>
</feature>
<accession>Q55F37</accession>
<comment type="function">
    <text evidence="4">Transcription factor that regulates cell differentiation during development. Seems to negatively regulate prestalk gene expression and positively regulate prespore gene expression.</text>
</comment>
<comment type="subcellular location">
    <subcellularLocation>
        <location evidence="2">Nucleus</location>
    </subcellularLocation>
</comment>
<comment type="induction">
    <text evidence="4">Induced during development in prespore cells.</text>
</comment>
<comment type="disruption phenotype">
    <text evidence="4">Leads to slower growth when feeded on bacteria, fewer slugs with lower migration, decreased spore production, reduced cell differentiation, and slightly abnormal prestalk differentiation.</text>
</comment>
<comment type="sequence caution" evidence="5">
    <conflict type="erroneous initiation">
        <sequence resource="EMBL-CDS" id="EAL73049"/>
    </conflict>
    <text>Extended N-terminus.</text>
</comment>
<reference key="1">
    <citation type="journal article" date="2005" name="Nature">
        <title>The genome of the social amoeba Dictyostelium discoideum.</title>
        <authorList>
            <person name="Eichinger L."/>
            <person name="Pachebat J.A."/>
            <person name="Gloeckner G."/>
            <person name="Rajandream M.A."/>
            <person name="Sucgang R."/>
            <person name="Berriman M."/>
            <person name="Song J."/>
            <person name="Olsen R."/>
            <person name="Szafranski K."/>
            <person name="Xu Q."/>
            <person name="Tunggal B."/>
            <person name="Kummerfeld S."/>
            <person name="Madera M."/>
            <person name="Konfortov B.A."/>
            <person name="Rivero F."/>
            <person name="Bankier A.T."/>
            <person name="Lehmann R."/>
            <person name="Hamlin N."/>
            <person name="Davies R."/>
            <person name="Gaudet P."/>
            <person name="Fey P."/>
            <person name="Pilcher K."/>
            <person name="Chen G."/>
            <person name="Saunders D."/>
            <person name="Sodergren E.J."/>
            <person name="Davis P."/>
            <person name="Kerhornou A."/>
            <person name="Nie X."/>
            <person name="Hall N."/>
            <person name="Anjard C."/>
            <person name="Hemphill L."/>
            <person name="Bason N."/>
            <person name="Farbrother P."/>
            <person name="Desany B."/>
            <person name="Just E."/>
            <person name="Morio T."/>
            <person name="Rost R."/>
            <person name="Churcher C.M."/>
            <person name="Cooper J."/>
            <person name="Haydock S."/>
            <person name="van Driessche N."/>
            <person name="Cronin A."/>
            <person name="Goodhead I."/>
            <person name="Muzny D.M."/>
            <person name="Mourier T."/>
            <person name="Pain A."/>
            <person name="Lu M."/>
            <person name="Harper D."/>
            <person name="Lindsay R."/>
            <person name="Hauser H."/>
            <person name="James K.D."/>
            <person name="Quiles M."/>
            <person name="Madan Babu M."/>
            <person name="Saito T."/>
            <person name="Buchrieser C."/>
            <person name="Wardroper A."/>
            <person name="Felder M."/>
            <person name="Thangavelu M."/>
            <person name="Johnson D."/>
            <person name="Knights A."/>
            <person name="Loulseged H."/>
            <person name="Mungall K.L."/>
            <person name="Oliver K."/>
            <person name="Price C."/>
            <person name="Quail M.A."/>
            <person name="Urushihara H."/>
            <person name="Hernandez J."/>
            <person name="Rabbinowitsch E."/>
            <person name="Steffen D."/>
            <person name="Sanders M."/>
            <person name="Ma J."/>
            <person name="Kohara Y."/>
            <person name="Sharp S."/>
            <person name="Simmonds M.N."/>
            <person name="Spiegler S."/>
            <person name="Tivey A."/>
            <person name="Sugano S."/>
            <person name="White B."/>
            <person name="Walker D."/>
            <person name="Woodward J.R."/>
            <person name="Winckler T."/>
            <person name="Tanaka Y."/>
            <person name="Shaulsky G."/>
            <person name="Schleicher M."/>
            <person name="Weinstock G.M."/>
            <person name="Rosenthal A."/>
            <person name="Cox E.C."/>
            <person name="Chisholm R.L."/>
            <person name="Gibbs R.A."/>
            <person name="Loomis W.F."/>
            <person name="Platzer M."/>
            <person name="Kay R.R."/>
            <person name="Williams J.G."/>
            <person name="Dear P.H."/>
            <person name="Noegel A.A."/>
            <person name="Barrell B.G."/>
            <person name="Kuspa A."/>
        </authorList>
    </citation>
    <scope>NUCLEOTIDE SEQUENCE [LARGE SCALE GENOMIC DNA]</scope>
    <source>
        <strain>AX4</strain>
    </source>
</reference>
<reference key="2">
    <citation type="journal article" date="2013" name="BMC Dev. Biol.">
        <title>Mef2A, a homologue of animal Mef2 transcription factors, regulates cell differentiation in Dictyostelium discoideum.</title>
        <authorList>
            <person name="Galardi-Castilla M."/>
            <person name="Fernandez-Aguado I."/>
            <person name="Suarez T."/>
            <person name="Sastre L."/>
        </authorList>
    </citation>
    <scope>REVISION OF GENE MODEL</scope>
    <scope>INDUCTION</scope>
    <scope>DISRUPTION PHENOTYPE</scope>
    <scope>FUNCTION</scope>
</reference>
<proteinExistence type="evidence at transcript level"/>
<keyword id="KW-0175">Coiled coil</keyword>
<keyword id="KW-0221">Differentiation</keyword>
<keyword id="KW-0238">DNA-binding</keyword>
<keyword id="KW-0539">Nucleus</keyword>
<keyword id="KW-1185">Reference proteome</keyword>
<keyword id="KW-0804">Transcription</keyword>
<keyword id="KW-0805">Transcription regulation</keyword>
<protein>
    <recommendedName>
        <fullName>Transcription factor mef2A</fullName>
    </recommendedName>
    <alternativeName>
        <fullName>Myocyte enhancer factor 2A</fullName>
    </alternativeName>
    <alternativeName>
        <fullName>Serum factor response C</fullName>
    </alternativeName>
</protein>
<evidence type="ECO:0000255" key="1"/>
<evidence type="ECO:0000255" key="2">
    <source>
        <dbReference type="PROSITE-ProRule" id="PRU00251"/>
    </source>
</evidence>
<evidence type="ECO:0000256" key="3">
    <source>
        <dbReference type="SAM" id="MobiDB-lite"/>
    </source>
</evidence>
<evidence type="ECO:0000269" key="4">
    <source>
    </source>
</evidence>
<evidence type="ECO:0000305" key="5"/>
<gene>
    <name type="primary">mef2A</name>
    <name type="synonym">sfrC</name>
    <name type="ORF">DDB_G0268920</name>
</gene>
<sequence length="1048" mass="117228">MGRNKITIEKISNERNRQATFTKRKNGLIKKAMELSILCDCEIAMIVFSSNNKLFQYSSRDMDKLLIRYTDNTDNTRKNLTNQDYNRVFGNKKSKNDDEDGDDDGDEDLGETPTTPHGNLNAHPIGSMENNNNNNNNNNNNNNNNNNNINNNNNNNNNSHHNNNNGNNNNNNNNNNNNNSNNNSNNNNSNNGNSNNNNNGNNANHNMHHHNGNSANISPMQMSQQANNNNSNNNNNNGNNNSNSNSNNNNNSNGYQQQQQAAQQAVQQAQMAQQMHLQQQQQYQQLQHIQQQQQQQHQQQQQNMGPNGYNHQQQQLQHQSPPPPPQQQQQQMQHSQQQQNMNGIIGHHSPVIVGNGVSLLQPSKWSASPYGEDLAPLTPRSASYKGIYGNQYPPQMQPVVNSNNNSNGNSNSMNNGISSPPINQQNQQNQKPPIMNKPGGGGQPMYYDYNGYPQQQQPPQNYNSNGGYWGQNVSSPPPPQQQQSANPYIQQQQQPQHQSPYYHGNYSPQQQSPVLNSQNGHHSSPMHPHQMHHQQHQHQQHPQMQQQQQQQQQHQQHPQMQQIQQQQHPQMQQHQQHQQQHPQMQQQHMNNHQINHHHLNSSPEINSQKNVHSSPLIMNSNNNNNNNNNNHHGNDNNNNNNNNSNNNNNNNNSNNNNNINNNINSNSNNNSNVNNGNNNNSGKVYNNNNNSNNGNNNNNKPEQTIPVKIEKEHSSSPTIPEQPSINVSTSSNSAHVFNNITSNSNNNNNNNNNNNNNNNNTNNNNNNNNNNNNNNNTNNINSNNNSSNTNVNVINNSSSSSTPPISPANINTQSPAISPALVPVVTSLNPQGEETSKPKFKKSLNLSIVIPEVGNSKYPPPQCKLTPINVEATKQPDIPTLPSPRDFYPEINLHHDNVSLTPNYWGGWHQTPRGSLLLTGNGGSNNSNSSNNNNNNNNNNNNTNNNNISGNGSSSSSSSSTQNPNGFLGCLSPRSFNFLNENNNNNNNNSSSGNNNNNNNNNNNNNNNNNNNNNNNNNNNNNNNNNNSNPDESDQSFNRKRKSMEPKN</sequence>
<name>SRFC_DICDI</name>
<organism>
    <name type="scientific">Dictyostelium discoideum</name>
    <name type="common">Social amoeba</name>
    <dbReference type="NCBI Taxonomy" id="44689"/>
    <lineage>
        <taxon>Eukaryota</taxon>
        <taxon>Amoebozoa</taxon>
        <taxon>Evosea</taxon>
        <taxon>Eumycetozoa</taxon>
        <taxon>Dictyostelia</taxon>
        <taxon>Dictyosteliales</taxon>
        <taxon>Dictyosteliaceae</taxon>
        <taxon>Dictyostelium</taxon>
    </lineage>
</organism>
<dbReference type="EMBL" id="AAFI02000004">
    <property type="protein sequence ID" value="EAL73049.1"/>
    <property type="status" value="ALT_INIT"/>
    <property type="molecule type" value="Genomic_DNA"/>
</dbReference>
<dbReference type="SMR" id="Q55F37"/>
<dbReference type="FunCoup" id="Q55F37">
    <property type="interactions" value="161"/>
</dbReference>
<dbReference type="STRING" id="44689.Q55F37"/>
<dbReference type="GlyGen" id="Q55F37">
    <property type="glycosylation" value="1 site"/>
</dbReference>
<dbReference type="PaxDb" id="44689-DDB0220491"/>
<dbReference type="EnsemblProtists" id="EAL73049">
    <property type="protein sequence ID" value="EAL73049"/>
    <property type="gene ID" value="DDB_G0268920"/>
</dbReference>
<dbReference type="KEGG" id="ddi:DDB_G0268920"/>
<dbReference type="dictyBase" id="DDB_G0268920">
    <property type="gene designation" value="mef2A"/>
</dbReference>
<dbReference type="VEuPathDB" id="AmoebaDB:DDB_G0268920"/>
<dbReference type="eggNOG" id="KOG0014">
    <property type="taxonomic scope" value="Eukaryota"/>
</dbReference>
<dbReference type="InParanoid" id="Q55F37"/>
<dbReference type="Reactome" id="R-DDI-525793">
    <property type="pathway name" value="Myogenesis"/>
</dbReference>
<dbReference type="PRO" id="PR:Q55F37"/>
<dbReference type="Proteomes" id="UP000002195">
    <property type="component" value="Chromosome 1"/>
</dbReference>
<dbReference type="GO" id="GO:0005634">
    <property type="term" value="C:nucleus"/>
    <property type="evidence" value="ECO:0007669"/>
    <property type="project" value="UniProtKB-SubCell"/>
</dbReference>
<dbReference type="GO" id="GO:0000981">
    <property type="term" value="F:DNA-binding transcription factor activity, RNA polymerase II-specific"/>
    <property type="evidence" value="ECO:0000318"/>
    <property type="project" value="GO_Central"/>
</dbReference>
<dbReference type="GO" id="GO:0046983">
    <property type="term" value="F:protein dimerization activity"/>
    <property type="evidence" value="ECO:0007669"/>
    <property type="project" value="InterPro"/>
</dbReference>
<dbReference type="GO" id="GO:0000978">
    <property type="term" value="F:RNA polymerase II cis-regulatory region sequence-specific DNA binding"/>
    <property type="evidence" value="ECO:0000318"/>
    <property type="project" value="GO_Central"/>
</dbReference>
<dbReference type="GO" id="GO:0030154">
    <property type="term" value="P:cell differentiation"/>
    <property type="evidence" value="ECO:0007669"/>
    <property type="project" value="UniProtKB-KW"/>
</dbReference>
<dbReference type="GO" id="GO:0045944">
    <property type="term" value="P:positive regulation of transcription by RNA polymerase II"/>
    <property type="evidence" value="ECO:0000318"/>
    <property type="project" value="GO_Central"/>
</dbReference>
<dbReference type="GO" id="GO:0010468">
    <property type="term" value="P:regulation of gene expression"/>
    <property type="evidence" value="ECO:0000315"/>
    <property type="project" value="dictyBase"/>
</dbReference>
<dbReference type="GO" id="GO:1901261">
    <property type="term" value="P:regulation of sorocarp spore cell differentiation"/>
    <property type="evidence" value="ECO:0000315"/>
    <property type="project" value="dictyBase"/>
</dbReference>
<dbReference type="GO" id="GO:0031285">
    <property type="term" value="P:regulation of sorocarp stalk cell differentiation"/>
    <property type="evidence" value="ECO:0000315"/>
    <property type="project" value="dictyBase"/>
</dbReference>
<dbReference type="CDD" id="cd00265">
    <property type="entry name" value="MADS_MEF2_like"/>
    <property type="match status" value="1"/>
</dbReference>
<dbReference type="Gene3D" id="3.40.1810.10">
    <property type="entry name" value="Transcription factor, MADS-box"/>
    <property type="match status" value="1"/>
</dbReference>
<dbReference type="InterPro" id="IPR033896">
    <property type="entry name" value="MEF2-like_N"/>
</dbReference>
<dbReference type="InterPro" id="IPR002100">
    <property type="entry name" value="TF_MADSbox"/>
</dbReference>
<dbReference type="InterPro" id="IPR036879">
    <property type="entry name" value="TF_MADSbox_sf"/>
</dbReference>
<dbReference type="Pfam" id="PF00319">
    <property type="entry name" value="SRF-TF"/>
    <property type="match status" value="1"/>
</dbReference>
<dbReference type="PRINTS" id="PR00404">
    <property type="entry name" value="MADSDOMAIN"/>
</dbReference>
<dbReference type="SMART" id="SM00432">
    <property type="entry name" value="MADS"/>
    <property type="match status" value="1"/>
</dbReference>
<dbReference type="SUPFAM" id="SSF55455">
    <property type="entry name" value="SRF-like"/>
    <property type="match status" value="1"/>
</dbReference>
<dbReference type="PROSITE" id="PS00350">
    <property type="entry name" value="MADS_BOX_1"/>
    <property type="match status" value="1"/>
</dbReference>
<dbReference type="PROSITE" id="PS50066">
    <property type="entry name" value="MADS_BOX_2"/>
    <property type="match status" value="1"/>
</dbReference>